<name>JAZF1_HUMAN</name>
<organism>
    <name type="scientific">Homo sapiens</name>
    <name type="common">Human</name>
    <dbReference type="NCBI Taxonomy" id="9606"/>
    <lineage>
        <taxon>Eukaryota</taxon>
        <taxon>Metazoa</taxon>
        <taxon>Chordata</taxon>
        <taxon>Craniata</taxon>
        <taxon>Vertebrata</taxon>
        <taxon>Euteleostomi</taxon>
        <taxon>Mammalia</taxon>
        <taxon>Eutheria</taxon>
        <taxon>Euarchontoglires</taxon>
        <taxon>Primates</taxon>
        <taxon>Haplorrhini</taxon>
        <taxon>Catarrhini</taxon>
        <taxon>Hominidae</taxon>
        <taxon>Homo</taxon>
    </lineage>
</organism>
<keyword id="KW-0025">Alternative splicing</keyword>
<keyword id="KW-0160">Chromosomal rearrangement</keyword>
<keyword id="KW-0443">Lipid metabolism</keyword>
<keyword id="KW-0479">Metal-binding</keyword>
<keyword id="KW-0539">Nucleus</keyword>
<keyword id="KW-0597">Phosphoprotein</keyword>
<keyword id="KW-1267">Proteomics identification</keyword>
<keyword id="KW-0656">Proto-oncogene</keyword>
<keyword id="KW-1185">Reference proteome</keyword>
<keyword id="KW-0677">Repeat</keyword>
<keyword id="KW-0804">Transcription</keyword>
<keyword id="KW-0805">Transcription regulation</keyword>
<keyword id="KW-0862">Zinc</keyword>
<keyword id="KW-0863">Zinc-finger</keyword>
<sequence length="243" mass="27079">MTGIAAASFFSNTCRFGGCGLHFPTLADLIEHIEDNHIDTDPRVLEKQELQQPTYVALSYINRFMTDAARREQESLKKKIQPKLSLTLSSSVSRGNVSTPPRHSSGSLTPPVTPPITPSSSFRSSTPTGSEYDEEEVDYEESDSDESWTTESAISSEAILSSMCMNGGEEKPFACPVPGCKKRYKNVNGIKYHAKNGHRTQIRVRKPFKCRCGKSYKTAQGLRHHTINFHPPVSAEIIRKMQQ</sequence>
<dbReference type="EMBL" id="AY372319">
    <property type="protein sequence ID" value="AAQ74874.1"/>
    <property type="molecule type" value="mRNA"/>
</dbReference>
<dbReference type="EMBL" id="AK091311">
    <property type="protein sequence ID" value="BAG52333.1"/>
    <property type="molecule type" value="mRNA"/>
</dbReference>
<dbReference type="EMBL" id="AL834234">
    <property type="protein sequence ID" value="CAD38912.1"/>
    <property type="status" value="ALT_INIT"/>
    <property type="molecule type" value="mRNA"/>
</dbReference>
<dbReference type="EMBL" id="CH236948">
    <property type="protein sequence ID" value="EAL24212.1"/>
    <property type="molecule type" value="Genomic_DNA"/>
</dbReference>
<dbReference type="EMBL" id="BC042441">
    <property type="protein sequence ID" value="AAH42441.1"/>
    <property type="molecule type" value="mRNA"/>
</dbReference>
<dbReference type="CCDS" id="CCDS5416.1">
    <molecule id="Q86VZ6-1"/>
</dbReference>
<dbReference type="RefSeq" id="NP_778231.2">
    <molecule id="Q86VZ6-1"/>
    <property type="nucleotide sequence ID" value="NM_175061.4"/>
</dbReference>
<dbReference type="RefSeq" id="XP_006715719.1">
    <property type="nucleotide sequence ID" value="XM_006715656.1"/>
</dbReference>
<dbReference type="RefSeq" id="XP_016867320.1">
    <property type="nucleotide sequence ID" value="XM_017011831.1"/>
</dbReference>
<dbReference type="RefSeq" id="XP_016867321.1">
    <property type="nucleotide sequence ID" value="XM_017011832.1"/>
</dbReference>
<dbReference type="RefSeq" id="XP_047275981.1">
    <molecule id="Q86VZ6-3"/>
    <property type="nucleotide sequence ID" value="XM_047420025.1"/>
</dbReference>
<dbReference type="RefSeq" id="XP_047275982.1">
    <molecule id="Q86VZ6-3"/>
    <property type="nucleotide sequence ID" value="XM_047420026.1"/>
</dbReference>
<dbReference type="RefSeq" id="XP_047275983.1">
    <molecule id="Q86VZ6-3"/>
    <property type="nucleotide sequence ID" value="XM_047420027.1"/>
</dbReference>
<dbReference type="RefSeq" id="XP_054213508.1">
    <molecule id="Q86VZ6-3"/>
    <property type="nucleotide sequence ID" value="XM_054357533.1"/>
</dbReference>
<dbReference type="RefSeq" id="XP_054213509.1">
    <molecule id="Q86VZ6-3"/>
    <property type="nucleotide sequence ID" value="XM_054357534.1"/>
</dbReference>
<dbReference type="RefSeq" id="XP_054213510.1">
    <molecule id="Q86VZ6-3"/>
    <property type="nucleotide sequence ID" value="XM_054357535.1"/>
</dbReference>
<dbReference type="BioGRID" id="128764">
    <property type="interactions" value="61"/>
</dbReference>
<dbReference type="FunCoup" id="Q86VZ6">
    <property type="interactions" value="1719"/>
</dbReference>
<dbReference type="IntAct" id="Q86VZ6">
    <property type="interactions" value="55"/>
</dbReference>
<dbReference type="STRING" id="9606.ENSP00000283928"/>
<dbReference type="GlyGen" id="Q86VZ6">
    <property type="glycosylation" value="2 sites, 1 N-linked glycan (1 site)"/>
</dbReference>
<dbReference type="iPTMnet" id="Q86VZ6"/>
<dbReference type="PhosphoSitePlus" id="Q86VZ6"/>
<dbReference type="BioMuta" id="JAZF1"/>
<dbReference type="DMDM" id="32699538"/>
<dbReference type="jPOST" id="Q86VZ6"/>
<dbReference type="MassIVE" id="Q86VZ6"/>
<dbReference type="PaxDb" id="9606-ENSP00000283928"/>
<dbReference type="PeptideAtlas" id="Q86VZ6"/>
<dbReference type="ProteomicsDB" id="70098">
    <molecule id="Q86VZ6-1"/>
</dbReference>
<dbReference type="Pumba" id="Q86VZ6"/>
<dbReference type="Antibodypedia" id="26034">
    <property type="antibodies" value="126 antibodies from 23 providers"/>
</dbReference>
<dbReference type="DNASU" id="221895"/>
<dbReference type="Ensembl" id="ENST00000283928.10">
    <molecule id="Q86VZ6-1"/>
    <property type="protein sequence ID" value="ENSP00000283928.5"/>
    <property type="gene ID" value="ENSG00000153814.13"/>
</dbReference>
<dbReference type="GeneID" id="221895"/>
<dbReference type="KEGG" id="hsa:221895"/>
<dbReference type="MANE-Select" id="ENST00000283928.10">
    <property type="protein sequence ID" value="ENSP00000283928.5"/>
    <property type="RefSeq nucleotide sequence ID" value="NM_175061.4"/>
    <property type="RefSeq protein sequence ID" value="NP_778231.2"/>
</dbReference>
<dbReference type="UCSC" id="uc003szn.4">
    <molecule id="Q86VZ6-1"/>
    <property type="organism name" value="human"/>
</dbReference>
<dbReference type="AGR" id="HGNC:28917"/>
<dbReference type="CTD" id="221895"/>
<dbReference type="DisGeNET" id="221895"/>
<dbReference type="GeneCards" id="JAZF1"/>
<dbReference type="HGNC" id="HGNC:28917">
    <property type="gene designation" value="JAZF1"/>
</dbReference>
<dbReference type="HPA" id="ENSG00000153814">
    <property type="expression patterns" value="Tissue enhanced (adrenal)"/>
</dbReference>
<dbReference type="MalaCards" id="JAZF1"/>
<dbReference type="MIM" id="606246">
    <property type="type" value="gene"/>
</dbReference>
<dbReference type="neXtProt" id="NX_Q86VZ6"/>
<dbReference type="NIAGADS" id="ENSG00000153814"/>
<dbReference type="OpenTargets" id="ENSG00000153814"/>
<dbReference type="Orphanet" id="213711">
    <property type="disease" value="Endometrial stromal sarcoma"/>
</dbReference>
<dbReference type="Orphanet" id="536">
    <property type="disease" value="Systemic lupus erythematosus"/>
</dbReference>
<dbReference type="PharmGKB" id="PA162392484"/>
<dbReference type="VEuPathDB" id="HostDB:ENSG00000153814"/>
<dbReference type="eggNOG" id="KOG4124">
    <property type="taxonomic scope" value="Eukaryota"/>
</dbReference>
<dbReference type="GeneTree" id="ENSGT00390000003635"/>
<dbReference type="HOGENOM" id="CLU_077501_0_0_1"/>
<dbReference type="InParanoid" id="Q86VZ6"/>
<dbReference type="OMA" id="CLWHGCG"/>
<dbReference type="OrthoDB" id="9533370at2759"/>
<dbReference type="PAN-GO" id="Q86VZ6">
    <property type="GO annotations" value="1 GO annotation based on evolutionary models"/>
</dbReference>
<dbReference type="PhylomeDB" id="Q86VZ6"/>
<dbReference type="TreeFam" id="TF324161"/>
<dbReference type="PathwayCommons" id="Q86VZ6"/>
<dbReference type="SignaLink" id="Q86VZ6"/>
<dbReference type="SIGNOR" id="Q86VZ6"/>
<dbReference type="BioGRID-ORCS" id="221895">
    <property type="hits" value="348 hits in 1151 CRISPR screens"/>
</dbReference>
<dbReference type="ChiTaRS" id="JAZF1">
    <property type="organism name" value="human"/>
</dbReference>
<dbReference type="GeneWiki" id="JAZF1"/>
<dbReference type="GenomeRNAi" id="221895"/>
<dbReference type="Pharos" id="Q86VZ6">
    <property type="development level" value="Tbio"/>
</dbReference>
<dbReference type="PRO" id="PR:Q86VZ6"/>
<dbReference type="Proteomes" id="UP000005640">
    <property type="component" value="Chromosome 7"/>
</dbReference>
<dbReference type="RNAct" id="Q86VZ6">
    <property type="molecule type" value="protein"/>
</dbReference>
<dbReference type="Bgee" id="ENSG00000153814">
    <property type="expression patterns" value="Expressed in trabecular bone tissue and 183 other cell types or tissues"/>
</dbReference>
<dbReference type="ExpressionAtlas" id="Q86VZ6">
    <property type="expression patterns" value="baseline and differential"/>
</dbReference>
<dbReference type="GO" id="GO:0005829">
    <property type="term" value="C:cytosol"/>
    <property type="evidence" value="ECO:0000314"/>
    <property type="project" value="HPA"/>
</dbReference>
<dbReference type="GO" id="GO:0001650">
    <property type="term" value="C:fibrillar center"/>
    <property type="evidence" value="ECO:0000314"/>
    <property type="project" value="HPA"/>
</dbReference>
<dbReference type="GO" id="GO:0005654">
    <property type="term" value="C:nucleoplasm"/>
    <property type="evidence" value="ECO:0000314"/>
    <property type="project" value="HPA"/>
</dbReference>
<dbReference type="GO" id="GO:0005634">
    <property type="term" value="C:nucleus"/>
    <property type="evidence" value="ECO:0000318"/>
    <property type="project" value="GO_Central"/>
</dbReference>
<dbReference type="GO" id="GO:0017053">
    <property type="term" value="C:transcription repressor complex"/>
    <property type="evidence" value="ECO:0000314"/>
    <property type="project" value="MGI"/>
</dbReference>
<dbReference type="GO" id="GO:0003714">
    <property type="term" value="F:transcription corepressor activity"/>
    <property type="evidence" value="ECO:0000314"/>
    <property type="project" value="MGI"/>
</dbReference>
<dbReference type="GO" id="GO:0008270">
    <property type="term" value="F:zinc ion binding"/>
    <property type="evidence" value="ECO:0007669"/>
    <property type="project" value="UniProtKB-KW"/>
</dbReference>
<dbReference type="GO" id="GO:0006629">
    <property type="term" value="P:lipid metabolic process"/>
    <property type="evidence" value="ECO:0007669"/>
    <property type="project" value="UniProtKB-KW"/>
</dbReference>
<dbReference type="GO" id="GO:0000122">
    <property type="term" value="P:negative regulation of transcription by RNA polymerase II"/>
    <property type="evidence" value="ECO:0000314"/>
    <property type="project" value="MGI"/>
</dbReference>
<dbReference type="FunFam" id="3.30.160.60:FF:003264">
    <property type="entry name" value="Juxtaposed with another zinc finger protein 1"/>
    <property type="match status" value="1"/>
</dbReference>
<dbReference type="FunFam" id="3.30.160.60:FF:000619">
    <property type="entry name" value="juxtaposed with another zinc finger protein 1"/>
    <property type="match status" value="1"/>
</dbReference>
<dbReference type="Gene3D" id="3.30.160.60">
    <property type="entry name" value="Classic Zinc Finger"/>
    <property type="match status" value="2"/>
</dbReference>
<dbReference type="InterPro" id="IPR051580">
    <property type="entry name" value="ZnF-Chromatin_assoc"/>
</dbReference>
<dbReference type="InterPro" id="IPR036236">
    <property type="entry name" value="Znf_C2H2_sf"/>
</dbReference>
<dbReference type="InterPro" id="IPR013087">
    <property type="entry name" value="Znf_C2H2_type"/>
</dbReference>
<dbReference type="PANTHER" id="PTHR23057">
    <property type="entry name" value="JUXTAPOSED WITH ANOTHER ZINC FINGER PROTEIN 1"/>
    <property type="match status" value="1"/>
</dbReference>
<dbReference type="PANTHER" id="PTHR23057:SF0">
    <property type="entry name" value="JUXTAPOSED WITH ANOTHER ZINC FINGER PROTEIN 1"/>
    <property type="match status" value="1"/>
</dbReference>
<dbReference type="SMART" id="SM00355">
    <property type="entry name" value="ZnF_C2H2"/>
    <property type="match status" value="3"/>
</dbReference>
<dbReference type="SUPFAM" id="SSF57667">
    <property type="entry name" value="beta-beta-alpha zinc fingers"/>
    <property type="match status" value="1"/>
</dbReference>
<dbReference type="PROSITE" id="PS00028">
    <property type="entry name" value="ZINC_FINGER_C2H2_1"/>
    <property type="match status" value="2"/>
</dbReference>
<proteinExistence type="evidence at protein level"/>
<evidence type="ECO:0000250" key="1">
    <source>
        <dbReference type="UniProtKB" id="Q80ZQ5"/>
    </source>
</evidence>
<evidence type="ECO:0000256" key="2">
    <source>
        <dbReference type="SAM" id="MobiDB-lite"/>
    </source>
</evidence>
<evidence type="ECO:0000269" key="3">
    <source>
    </source>
</evidence>
<evidence type="ECO:0000269" key="4">
    <source>
    </source>
</evidence>
<evidence type="ECO:0000269" key="5">
    <source>
    </source>
</evidence>
<evidence type="ECO:0000305" key="6"/>
<evidence type="ECO:0000305" key="7">
    <source>
    </source>
</evidence>
<evidence type="ECO:0000312" key="8">
    <source>
        <dbReference type="HGNC" id="HGNC:28917"/>
    </source>
</evidence>
<evidence type="ECO:0007744" key="9">
    <source>
    </source>
</evidence>
<protein>
    <recommendedName>
        <fullName evidence="6">Juxtaposed with another zinc finger protein 1</fullName>
    </recommendedName>
    <alternativeName>
        <fullName>TAK1-interacting protein 27</fullName>
    </alternativeName>
    <alternativeName>
        <fullName>Zinc finger protein 802</fullName>
    </alternativeName>
</protein>
<comment type="function">
    <text evidence="1 4">Acts as a transcriptional corepressor of orphan nuclear receptor NR2C2 (PubMed:15302918). Inhibits expression of the gluconeogenesis enzyme PCK2 through inhibition of NR2C2 activity (By similarity). Also involved in transcriptional activation of NAMPT by promoting expression of PPARA and PPARD (By similarity). Plays a role in lipid metabolism by suppressing lipogenesis, increasing lipolysis and decreasing lipid accumulation in adipose tissue (By similarity). Plays a role in glucose homeostasis by improving glucose metabolism and insulin sensitivity (By similarity).</text>
</comment>
<comment type="subunit">
    <text evidence="4">Interacts with NR2C2 (via ligand-binding region).</text>
</comment>
<comment type="interaction">
    <interactant intactId="EBI-11023753">
        <id>Q86VZ6</id>
    </interactant>
    <interactant intactId="EBI-10175124">
        <id>Q8IZU0</id>
        <label>FAM9B</label>
    </interactant>
    <organismsDiffer>false</organismsDiffer>
    <experiments>3</experiments>
</comment>
<comment type="interaction">
    <interactant intactId="EBI-11023753">
        <id>Q86VZ6</id>
    </interactant>
    <interactant intactId="EBI-2652582">
        <id>P49116</id>
        <label>NR2C2</label>
    </interactant>
    <organismsDiffer>false</organismsDiffer>
    <experiments>10</experiments>
</comment>
<comment type="subcellular location">
    <subcellularLocation>
        <location evidence="4">Nucleus</location>
    </subcellularLocation>
</comment>
<comment type="alternative products">
    <event type="alternative splicing"/>
    <isoform>
        <id>Q86VZ6-1</id>
        <name>1</name>
        <sequence type="displayed"/>
    </isoform>
    <isoform>
        <id>Q86VZ6-3</id>
        <name>3</name>
        <sequence type="described" ref="VSP_061580"/>
    </isoform>
</comment>
<comment type="tissue specificity">
    <text evidence="4">Highest expression in testis with moderate levels in colon, placenta, prostate and ovary and low levels in brain, spleen, liver and small intestine.</text>
</comment>
<comment type="disease">
    <text evidence="3 5">A chromosomal aberration involving JAZF1 may be a cause of endometrial stromal tumors. Translocation t(7;17)(p15;q21) with SUZ12. The translocation generates the JAZF1-SUZ12 oncogene consisting of the N-terminus part of JAZF1 and the C-terminus part of SUZ12. It is frequently found in all cases of endometrial stromal tumors, except in endometrial stromal sarcomas, where it is rarer. Translocation t(6;7)(p21;p22) with PHF1.</text>
</comment>
<comment type="miscellaneous">
    <text evidence="7">Under hypoxic conditions, the precursor SUZ12 RNA undergoes regulated trans-splicing with the JAZF1 RNA, resulting in a chimeric isoform which may be protective against apoptosis. The chimeric transcript is characterized by JAZF1 exons 1-3 joined to SUZ12 exon 2-16. The chimeric transcript is expressed primarily in the endometrium from late secretory and early proliferative phases of the menstrual cycle, but not in normal myometrium at any phase of the cycle. Its expression is slightly induced by low levels of progesterone, but suppressed by both estrogen and high levels of progesterone (PubMed:18772439).</text>
</comment>
<comment type="sequence caution" evidence="6">
    <conflict type="erroneous initiation">
        <sequence resource="EMBL-CDS" id="CAD38912"/>
    </conflict>
    <text>Extended N-terminus.</text>
</comment>
<comment type="online information" name="Atlas of Genetics and Cytogenetics in Oncology and Haematology">
    <link uri="https://atlasgeneticsoncology.org/gene/41036/JAZF1"/>
</comment>
<reference key="1">
    <citation type="journal article" date="2004" name="Nucleic Acids Res.">
        <title>TIP27: a novel repressor of the nuclear orphan receptor TAK1/TR4.</title>
        <authorList>
            <person name="Nakajima T."/>
            <person name="Fujino S."/>
            <person name="Nakanishi G."/>
            <person name="Kim Y.S."/>
            <person name="Jetten A.M."/>
        </authorList>
    </citation>
    <scope>NUCLEOTIDE SEQUENCE [MRNA] (ISOFORM 1)</scope>
    <scope>FUNCTION</scope>
    <scope>INTERACTION WITH NR2C2</scope>
    <scope>SUBCELLULAR LOCATION</scope>
    <scope>TISSUE SPECIFICITY</scope>
    <scope>MUTAGENESIS OF LYS-47; TYR-60; ALA-69 AND LEU-76</scope>
</reference>
<reference key="2">
    <citation type="journal article" date="2004" name="Nat. Genet.">
        <title>Complete sequencing and characterization of 21,243 full-length human cDNAs.</title>
        <authorList>
            <person name="Ota T."/>
            <person name="Suzuki Y."/>
            <person name="Nishikawa T."/>
            <person name="Otsuki T."/>
            <person name="Sugiyama T."/>
            <person name="Irie R."/>
            <person name="Wakamatsu A."/>
            <person name="Hayashi K."/>
            <person name="Sato H."/>
            <person name="Nagai K."/>
            <person name="Kimura K."/>
            <person name="Makita H."/>
            <person name="Sekine M."/>
            <person name="Obayashi M."/>
            <person name="Nishi T."/>
            <person name="Shibahara T."/>
            <person name="Tanaka T."/>
            <person name="Ishii S."/>
            <person name="Yamamoto J."/>
            <person name="Saito K."/>
            <person name="Kawai Y."/>
            <person name="Isono Y."/>
            <person name="Nakamura Y."/>
            <person name="Nagahari K."/>
            <person name="Murakami K."/>
            <person name="Yasuda T."/>
            <person name="Iwayanagi T."/>
            <person name="Wagatsuma M."/>
            <person name="Shiratori A."/>
            <person name="Sudo H."/>
            <person name="Hosoiri T."/>
            <person name="Kaku Y."/>
            <person name="Kodaira H."/>
            <person name="Kondo H."/>
            <person name="Sugawara M."/>
            <person name="Takahashi M."/>
            <person name="Kanda K."/>
            <person name="Yokoi T."/>
            <person name="Furuya T."/>
            <person name="Kikkawa E."/>
            <person name="Omura Y."/>
            <person name="Abe K."/>
            <person name="Kamihara K."/>
            <person name="Katsuta N."/>
            <person name="Sato K."/>
            <person name="Tanikawa M."/>
            <person name="Yamazaki M."/>
            <person name="Ninomiya K."/>
            <person name="Ishibashi T."/>
            <person name="Yamashita H."/>
            <person name="Murakawa K."/>
            <person name="Fujimori K."/>
            <person name="Tanai H."/>
            <person name="Kimata M."/>
            <person name="Watanabe M."/>
            <person name="Hiraoka S."/>
            <person name="Chiba Y."/>
            <person name="Ishida S."/>
            <person name="Ono Y."/>
            <person name="Takiguchi S."/>
            <person name="Watanabe S."/>
            <person name="Yosida M."/>
            <person name="Hotuta T."/>
            <person name="Kusano J."/>
            <person name="Kanehori K."/>
            <person name="Takahashi-Fujii A."/>
            <person name="Hara H."/>
            <person name="Tanase T.-O."/>
            <person name="Nomura Y."/>
            <person name="Togiya S."/>
            <person name="Komai F."/>
            <person name="Hara R."/>
            <person name="Takeuchi K."/>
            <person name="Arita M."/>
            <person name="Imose N."/>
            <person name="Musashino K."/>
            <person name="Yuuki H."/>
            <person name="Oshima A."/>
            <person name="Sasaki N."/>
            <person name="Aotsuka S."/>
            <person name="Yoshikawa Y."/>
            <person name="Matsunawa H."/>
            <person name="Ichihara T."/>
            <person name="Shiohata N."/>
            <person name="Sano S."/>
            <person name="Moriya S."/>
            <person name="Momiyama H."/>
            <person name="Satoh N."/>
            <person name="Takami S."/>
            <person name="Terashima Y."/>
            <person name="Suzuki O."/>
            <person name="Nakagawa S."/>
            <person name="Senoh A."/>
            <person name="Mizoguchi H."/>
            <person name="Goto Y."/>
            <person name="Shimizu F."/>
            <person name="Wakebe H."/>
            <person name="Hishigaki H."/>
            <person name="Watanabe T."/>
            <person name="Sugiyama A."/>
            <person name="Takemoto M."/>
            <person name="Kawakami B."/>
            <person name="Yamazaki M."/>
            <person name="Watanabe K."/>
            <person name="Kumagai A."/>
            <person name="Itakura S."/>
            <person name="Fukuzumi Y."/>
            <person name="Fujimori Y."/>
            <person name="Komiyama M."/>
            <person name="Tashiro H."/>
            <person name="Tanigami A."/>
            <person name="Fujiwara T."/>
            <person name="Ono T."/>
            <person name="Yamada K."/>
            <person name="Fujii Y."/>
            <person name="Ozaki K."/>
            <person name="Hirao M."/>
            <person name="Ohmori Y."/>
            <person name="Kawabata A."/>
            <person name="Hikiji T."/>
            <person name="Kobatake N."/>
            <person name="Inagaki H."/>
            <person name="Ikema Y."/>
            <person name="Okamoto S."/>
            <person name="Okitani R."/>
            <person name="Kawakami T."/>
            <person name="Noguchi S."/>
            <person name="Itoh T."/>
            <person name="Shigeta K."/>
            <person name="Senba T."/>
            <person name="Matsumura K."/>
            <person name="Nakajima Y."/>
            <person name="Mizuno T."/>
            <person name="Morinaga M."/>
            <person name="Sasaki M."/>
            <person name="Togashi T."/>
            <person name="Oyama M."/>
            <person name="Hata H."/>
            <person name="Watanabe M."/>
            <person name="Komatsu T."/>
            <person name="Mizushima-Sugano J."/>
            <person name="Satoh T."/>
            <person name="Shirai Y."/>
            <person name="Takahashi Y."/>
            <person name="Nakagawa K."/>
            <person name="Okumura K."/>
            <person name="Nagase T."/>
            <person name="Nomura N."/>
            <person name="Kikuchi H."/>
            <person name="Masuho Y."/>
            <person name="Yamashita R."/>
            <person name="Nakai K."/>
            <person name="Yada T."/>
            <person name="Nakamura Y."/>
            <person name="Ohara O."/>
            <person name="Isogai T."/>
            <person name="Sugano S."/>
        </authorList>
    </citation>
    <scope>NUCLEOTIDE SEQUENCE [LARGE SCALE MRNA] (ISOFORM 1)</scope>
</reference>
<reference key="3">
    <citation type="journal article" date="2007" name="BMC Genomics">
        <title>The full-ORF clone resource of the German cDNA consortium.</title>
        <authorList>
            <person name="Bechtel S."/>
            <person name="Rosenfelder H."/>
            <person name="Duda A."/>
            <person name="Schmidt C.P."/>
            <person name="Ernst U."/>
            <person name="Wellenreuther R."/>
            <person name="Mehrle A."/>
            <person name="Schuster C."/>
            <person name="Bahr A."/>
            <person name="Bloecker H."/>
            <person name="Heubner D."/>
            <person name="Hoerlein A."/>
            <person name="Michel G."/>
            <person name="Wedler H."/>
            <person name="Koehrer K."/>
            <person name="Ottenwaelder B."/>
            <person name="Poustka A."/>
            <person name="Wiemann S."/>
            <person name="Schupp I."/>
        </authorList>
    </citation>
    <scope>NUCLEOTIDE SEQUENCE [LARGE SCALE MRNA] (ISOFORM 3)</scope>
    <source>
        <tissue>Amygdala</tissue>
    </source>
</reference>
<reference key="4">
    <citation type="journal article" date="2003" name="Science">
        <title>Human chromosome 7: DNA sequence and biology.</title>
        <authorList>
            <person name="Scherer S.W."/>
            <person name="Cheung J."/>
            <person name="MacDonald J.R."/>
            <person name="Osborne L.R."/>
            <person name="Nakabayashi K."/>
            <person name="Herbrick J.-A."/>
            <person name="Carson A.R."/>
            <person name="Parker-Katiraee L."/>
            <person name="Skaug J."/>
            <person name="Khaja R."/>
            <person name="Zhang J."/>
            <person name="Hudek A.K."/>
            <person name="Li M."/>
            <person name="Haddad M."/>
            <person name="Duggan G.E."/>
            <person name="Fernandez B.A."/>
            <person name="Kanematsu E."/>
            <person name="Gentles S."/>
            <person name="Christopoulos C.C."/>
            <person name="Choufani S."/>
            <person name="Kwasnicka D."/>
            <person name="Zheng X.H."/>
            <person name="Lai Z."/>
            <person name="Nusskern D.R."/>
            <person name="Zhang Q."/>
            <person name="Gu Z."/>
            <person name="Lu F."/>
            <person name="Zeesman S."/>
            <person name="Nowaczyk M.J."/>
            <person name="Teshima I."/>
            <person name="Chitayat D."/>
            <person name="Shuman C."/>
            <person name="Weksberg R."/>
            <person name="Zackai E.H."/>
            <person name="Grebe T.A."/>
            <person name="Cox S.R."/>
            <person name="Kirkpatrick S.J."/>
            <person name="Rahman N."/>
            <person name="Friedman J.M."/>
            <person name="Heng H.H.Q."/>
            <person name="Pelicci P.G."/>
            <person name="Lo-Coco F."/>
            <person name="Belloni E."/>
            <person name="Shaffer L.G."/>
            <person name="Pober B."/>
            <person name="Morton C.C."/>
            <person name="Gusella J.F."/>
            <person name="Bruns G.A.P."/>
            <person name="Korf B.R."/>
            <person name="Quade B.J."/>
            <person name="Ligon A.H."/>
            <person name="Ferguson H."/>
            <person name="Higgins A.W."/>
            <person name="Leach N.T."/>
            <person name="Herrick S.R."/>
            <person name="Lemyre E."/>
            <person name="Farra C.G."/>
            <person name="Kim H.-G."/>
            <person name="Summers A.M."/>
            <person name="Gripp K.W."/>
            <person name="Roberts W."/>
            <person name="Szatmari P."/>
            <person name="Winsor E.J.T."/>
            <person name="Grzeschik K.-H."/>
            <person name="Teebi A."/>
            <person name="Minassian B.A."/>
            <person name="Kere J."/>
            <person name="Armengol L."/>
            <person name="Pujana M.A."/>
            <person name="Estivill X."/>
            <person name="Wilson M.D."/>
            <person name="Koop B.F."/>
            <person name="Tosi S."/>
            <person name="Moore G.E."/>
            <person name="Boright A.P."/>
            <person name="Zlotorynski E."/>
            <person name="Kerem B."/>
            <person name="Kroisel P.M."/>
            <person name="Petek E."/>
            <person name="Oscier D.G."/>
            <person name="Mould S.J."/>
            <person name="Doehner H."/>
            <person name="Doehner K."/>
            <person name="Rommens J.M."/>
            <person name="Vincent J.B."/>
            <person name="Venter J.C."/>
            <person name="Li P.W."/>
            <person name="Mural R.J."/>
            <person name="Adams M.D."/>
            <person name="Tsui L.-C."/>
        </authorList>
    </citation>
    <scope>NUCLEOTIDE SEQUENCE [LARGE SCALE GENOMIC DNA]</scope>
</reference>
<reference key="5">
    <citation type="journal article" date="2004" name="Genome Res.">
        <title>The status, quality, and expansion of the NIH full-length cDNA project: the Mammalian Gene Collection (MGC).</title>
        <authorList>
            <consortium name="The MGC Project Team"/>
        </authorList>
    </citation>
    <scope>NUCLEOTIDE SEQUENCE [LARGE SCALE MRNA] (ISOFORM 1)</scope>
    <source>
        <tissue>Brain</tissue>
        <tissue>Testis</tissue>
    </source>
</reference>
<reference key="6">
    <citation type="journal article" date="2001" name="Proc. Natl. Acad. Sci. U.S.A.">
        <title>Frequent fusion of the JAZF1 and JJAZ1 genes in endometrial stromal tumors.</title>
        <authorList>
            <person name="Koontz J.I."/>
            <person name="Soreng A.L."/>
            <person name="Nucci M."/>
            <person name="Kuo F.C."/>
            <person name="Pauwels P."/>
            <person name="van Den Berghe H."/>
            <person name="Cin P.D."/>
            <person name="Fletcher J.A."/>
            <person name="Sklar J."/>
        </authorList>
    </citation>
    <scope>DISEASE</scope>
    <scope>CHROMOSOMAL TRANSLOCATION WITH SUZ12</scope>
</reference>
<reference key="7">
    <citation type="journal article" date="2006" name="Cancer Res.">
        <title>Consistent rearrangement of chromosomal band 6p21 with generation of fusion genes JAZF1/PHF1 and EPC1/PHF1 in endometrial stromal sarcoma.</title>
        <authorList>
            <person name="Micci F."/>
            <person name="Panagopoulos I."/>
            <person name="Bjerkehagen B."/>
            <person name="Heim S."/>
        </authorList>
    </citation>
    <scope>DISEASE</scope>
    <scope>CHROMOSOMAL TRANSLOCATION WITH PHF1</scope>
</reference>
<reference key="8">
    <citation type="journal article" date="2008" name="Science">
        <title>A neoplastic gene fusion mimics trans-splicing of RNAs in normal human cells.</title>
        <authorList>
            <person name="Li H."/>
            <person name="Wang J."/>
            <person name="Mor G."/>
            <person name="Sklar J."/>
        </authorList>
    </citation>
    <scope>TRANS-SPLICING</scope>
</reference>
<reference key="9">
    <citation type="journal article" date="2013" name="J. Proteome Res.">
        <title>Toward a comprehensive characterization of a human cancer cell phosphoproteome.</title>
        <authorList>
            <person name="Zhou H."/>
            <person name="Di Palma S."/>
            <person name="Preisinger C."/>
            <person name="Peng M."/>
            <person name="Polat A.N."/>
            <person name="Heck A.J."/>
            <person name="Mohammed S."/>
        </authorList>
    </citation>
    <scope>PHOSPHORYLATION [LARGE SCALE ANALYSIS] AT THR-113</scope>
    <scope>IDENTIFICATION BY MASS SPECTROMETRY [LARGE SCALE ANALYSIS]</scope>
    <source>
        <tissue>Cervix carcinoma</tissue>
    </source>
</reference>
<gene>
    <name evidence="8" type="primary">JAZF1</name>
    <name type="synonym">TIP27</name>
    <name type="synonym">ZNF802</name>
</gene>
<feature type="chain" id="PRO_0000046985" description="Juxtaposed with another zinc finger protein 1">
    <location>
        <begin position="1"/>
        <end position="243"/>
    </location>
</feature>
<feature type="zinc finger region" description="C2H2-type 1">
    <location>
        <begin position="12"/>
        <end position="37"/>
    </location>
</feature>
<feature type="zinc finger region" description="C2H2-type 2">
    <location>
        <begin position="173"/>
        <end position="198"/>
    </location>
</feature>
<feature type="zinc finger region" description="C2H2-type 3; degenerate">
    <location>
        <begin position="208"/>
        <end position="230"/>
    </location>
</feature>
<feature type="region of interest" description="Required for interaction with NR2C2" evidence="4">
    <location>
        <begin position="39"/>
        <end position="79"/>
    </location>
</feature>
<feature type="region of interest" description="Disordered" evidence="2">
    <location>
        <begin position="89"/>
        <end position="151"/>
    </location>
</feature>
<feature type="compositionally biased region" description="Polar residues" evidence="2">
    <location>
        <begin position="89"/>
        <end position="108"/>
    </location>
</feature>
<feature type="compositionally biased region" description="Low complexity" evidence="2">
    <location>
        <begin position="118"/>
        <end position="130"/>
    </location>
</feature>
<feature type="compositionally biased region" description="Acidic residues" evidence="2">
    <location>
        <begin position="131"/>
        <end position="148"/>
    </location>
</feature>
<feature type="site" description="Breakpoint for translocation to form JAZF1-SUZ12 oncogene">
    <location>
        <begin position="129"/>
        <end position="130"/>
    </location>
</feature>
<feature type="modified residue" description="Phosphothreonine" evidence="1">
    <location>
        <position position="109"/>
    </location>
</feature>
<feature type="modified residue" description="Phosphothreonine" evidence="9">
    <location>
        <position position="113"/>
    </location>
</feature>
<feature type="splice variant" id="VSP_061580" description="In isoform 3.">
    <location>
        <begin position="1"/>
        <end position="64"/>
    </location>
</feature>
<feature type="mutagenesis site" description="Little effect on interaction with NR2C2." evidence="4">
    <original>K</original>
    <variation>P</variation>
    <location>
        <position position="47"/>
    </location>
</feature>
<feature type="mutagenesis site" description="Abolishes interaction with NR2C2." evidence="4">
    <original>Y</original>
    <variation>D</variation>
    <location>
        <position position="60"/>
    </location>
</feature>
<feature type="mutagenesis site" description="Little effect on interaction with NR2C2." evidence="4">
    <original>A</original>
    <variation>P</variation>
    <location>
        <position position="69"/>
    </location>
</feature>
<feature type="mutagenesis site" description="Reduces interaction with NR2C2." evidence="4">
    <original>L</original>
    <variation>P</variation>
    <location>
        <position position="76"/>
    </location>
</feature>
<feature type="sequence conflict" description="In Ref. 5; AAH42441." evidence="6" ref="5">
    <original>D</original>
    <variation>G</variation>
    <location>
        <position position="133"/>
    </location>
</feature>
<accession>Q86VZ6</accession>
<accession>A4D195</accession>
<accession>Q8N3L7</accession>